<proteinExistence type="inferred from homology"/>
<organism>
    <name type="scientific">Frankia casuarinae (strain DSM 45818 / CECT 9043 / HFP020203 / CcI3)</name>
    <dbReference type="NCBI Taxonomy" id="106370"/>
    <lineage>
        <taxon>Bacteria</taxon>
        <taxon>Bacillati</taxon>
        <taxon>Actinomycetota</taxon>
        <taxon>Actinomycetes</taxon>
        <taxon>Frankiales</taxon>
        <taxon>Frankiaceae</taxon>
        <taxon>Frankia</taxon>
    </lineage>
</organism>
<protein>
    <recommendedName>
        <fullName evidence="1">Acetylglutamate kinase</fullName>
        <ecNumber evidence="1">2.7.2.8</ecNumber>
    </recommendedName>
    <alternativeName>
        <fullName evidence="1">N-acetyl-L-glutamate 5-phosphotransferase</fullName>
    </alternativeName>
    <alternativeName>
        <fullName evidence="1">NAG kinase</fullName>
        <shortName evidence="1">NAGK</shortName>
    </alternativeName>
</protein>
<evidence type="ECO:0000255" key="1">
    <source>
        <dbReference type="HAMAP-Rule" id="MF_00082"/>
    </source>
</evidence>
<evidence type="ECO:0000256" key="2">
    <source>
        <dbReference type="SAM" id="MobiDB-lite"/>
    </source>
</evidence>
<accession>Q2J862</accession>
<name>ARGB_FRACC</name>
<reference key="1">
    <citation type="journal article" date="2007" name="Genome Res.">
        <title>Genome characteristics of facultatively symbiotic Frankia sp. strains reflect host range and host plant biogeography.</title>
        <authorList>
            <person name="Normand P."/>
            <person name="Lapierre P."/>
            <person name="Tisa L.S."/>
            <person name="Gogarten J.P."/>
            <person name="Alloisio N."/>
            <person name="Bagnarol E."/>
            <person name="Bassi C.A."/>
            <person name="Berry A.M."/>
            <person name="Bickhart D.M."/>
            <person name="Choisne N."/>
            <person name="Couloux A."/>
            <person name="Cournoyer B."/>
            <person name="Cruveiller S."/>
            <person name="Daubin V."/>
            <person name="Demange N."/>
            <person name="Francino M.P."/>
            <person name="Goltsman E."/>
            <person name="Huang Y."/>
            <person name="Kopp O.R."/>
            <person name="Labarre L."/>
            <person name="Lapidus A."/>
            <person name="Lavire C."/>
            <person name="Marechal J."/>
            <person name="Martinez M."/>
            <person name="Mastronunzio J.E."/>
            <person name="Mullin B.C."/>
            <person name="Niemann J."/>
            <person name="Pujic P."/>
            <person name="Rawnsley T."/>
            <person name="Rouy Z."/>
            <person name="Schenowitz C."/>
            <person name="Sellstedt A."/>
            <person name="Tavares F."/>
            <person name="Tomkins J.P."/>
            <person name="Vallenet D."/>
            <person name="Valverde C."/>
            <person name="Wall L.G."/>
            <person name="Wang Y."/>
            <person name="Medigue C."/>
            <person name="Benson D.R."/>
        </authorList>
    </citation>
    <scope>NUCLEOTIDE SEQUENCE [LARGE SCALE GENOMIC DNA]</scope>
    <source>
        <strain>DSM 45818 / CECT 9043 / HFP020203 / CcI3</strain>
    </source>
</reference>
<comment type="function">
    <text evidence="1">Catalyzes the ATP-dependent phosphorylation of N-acetyl-L-glutamate.</text>
</comment>
<comment type="catalytic activity">
    <reaction evidence="1">
        <text>N-acetyl-L-glutamate + ATP = N-acetyl-L-glutamyl 5-phosphate + ADP</text>
        <dbReference type="Rhea" id="RHEA:14629"/>
        <dbReference type="ChEBI" id="CHEBI:30616"/>
        <dbReference type="ChEBI" id="CHEBI:44337"/>
        <dbReference type="ChEBI" id="CHEBI:57936"/>
        <dbReference type="ChEBI" id="CHEBI:456216"/>
        <dbReference type="EC" id="2.7.2.8"/>
    </reaction>
</comment>
<comment type="pathway">
    <text evidence="1">Amino-acid biosynthesis; L-arginine biosynthesis; N(2)-acetyl-L-ornithine from L-glutamate: step 2/4.</text>
</comment>
<comment type="subcellular location">
    <subcellularLocation>
        <location evidence="1">Cytoplasm</location>
    </subcellularLocation>
</comment>
<comment type="similarity">
    <text evidence="1">Belongs to the acetylglutamate kinase family. ArgB subfamily.</text>
</comment>
<gene>
    <name evidence="1" type="primary">argB</name>
    <name type="ordered locus">Francci3_3173</name>
</gene>
<feature type="chain" id="PRO_0000264708" description="Acetylglutamate kinase">
    <location>
        <begin position="1"/>
        <end position="362"/>
    </location>
</feature>
<feature type="region of interest" description="Disordered" evidence="2">
    <location>
        <begin position="1"/>
        <end position="42"/>
    </location>
</feature>
<feature type="region of interest" description="Disordered" evidence="2">
    <location>
        <begin position="329"/>
        <end position="362"/>
    </location>
</feature>
<feature type="compositionally biased region" description="Pro residues" evidence="2">
    <location>
        <begin position="1"/>
        <end position="11"/>
    </location>
</feature>
<feature type="compositionally biased region" description="Low complexity" evidence="2">
    <location>
        <begin position="346"/>
        <end position="355"/>
    </location>
</feature>
<feature type="binding site" evidence="1">
    <location>
        <begin position="106"/>
        <end position="107"/>
    </location>
    <ligand>
        <name>substrate</name>
    </ligand>
</feature>
<feature type="binding site" evidence="1">
    <location>
        <position position="128"/>
    </location>
    <ligand>
        <name>substrate</name>
    </ligand>
</feature>
<feature type="binding site" evidence="1">
    <location>
        <position position="227"/>
    </location>
    <ligand>
        <name>substrate</name>
    </ligand>
</feature>
<feature type="site" description="Transition state stabilizer" evidence="1">
    <location>
        <position position="71"/>
    </location>
</feature>
<feature type="site" description="Transition state stabilizer" evidence="1">
    <location>
        <position position="288"/>
    </location>
</feature>
<dbReference type="EC" id="2.7.2.8" evidence="1"/>
<dbReference type="EMBL" id="CP000249">
    <property type="protein sequence ID" value="ABD12530.1"/>
    <property type="molecule type" value="Genomic_DNA"/>
</dbReference>
<dbReference type="RefSeq" id="WP_011437558.1">
    <property type="nucleotide sequence ID" value="NZ_JENI01000044.1"/>
</dbReference>
<dbReference type="SMR" id="Q2J862"/>
<dbReference type="STRING" id="106370.Francci3_3173"/>
<dbReference type="KEGG" id="fra:Francci3_3173"/>
<dbReference type="eggNOG" id="COG0548">
    <property type="taxonomic scope" value="Bacteria"/>
</dbReference>
<dbReference type="HOGENOM" id="CLU_053680_0_1_11"/>
<dbReference type="OrthoDB" id="9803155at2"/>
<dbReference type="PhylomeDB" id="Q2J862"/>
<dbReference type="UniPathway" id="UPA00068">
    <property type="reaction ID" value="UER00107"/>
</dbReference>
<dbReference type="Proteomes" id="UP000001937">
    <property type="component" value="Chromosome"/>
</dbReference>
<dbReference type="GO" id="GO:0005737">
    <property type="term" value="C:cytoplasm"/>
    <property type="evidence" value="ECO:0007669"/>
    <property type="project" value="UniProtKB-SubCell"/>
</dbReference>
<dbReference type="GO" id="GO:0003991">
    <property type="term" value="F:acetylglutamate kinase activity"/>
    <property type="evidence" value="ECO:0007669"/>
    <property type="project" value="UniProtKB-UniRule"/>
</dbReference>
<dbReference type="GO" id="GO:0005524">
    <property type="term" value="F:ATP binding"/>
    <property type="evidence" value="ECO:0007669"/>
    <property type="project" value="UniProtKB-UniRule"/>
</dbReference>
<dbReference type="GO" id="GO:0042450">
    <property type="term" value="P:arginine biosynthetic process via ornithine"/>
    <property type="evidence" value="ECO:0007669"/>
    <property type="project" value="UniProtKB-UniRule"/>
</dbReference>
<dbReference type="GO" id="GO:0006526">
    <property type="term" value="P:L-arginine biosynthetic process"/>
    <property type="evidence" value="ECO:0007669"/>
    <property type="project" value="UniProtKB-UniPathway"/>
</dbReference>
<dbReference type="CDD" id="cd04250">
    <property type="entry name" value="AAK_NAGK-C"/>
    <property type="match status" value="1"/>
</dbReference>
<dbReference type="FunFam" id="3.40.1160.10:FF:000004">
    <property type="entry name" value="Acetylglutamate kinase"/>
    <property type="match status" value="1"/>
</dbReference>
<dbReference type="Gene3D" id="3.40.1160.10">
    <property type="entry name" value="Acetylglutamate kinase-like"/>
    <property type="match status" value="1"/>
</dbReference>
<dbReference type="HAMAP" id="MF_00082">
    <property type="entry name" value="ArgB"/>
    <property type="match status" value="1"/>
</dbReference>
<dbReference type="InterPro" id="IPR036393">
    <property type="entry name" value="AceGlu_kinase-like_sf"/>
</dbReference>
<dbReference type="InterPro" id="IPR004662">
    <property type="entry name" value="AcgluKinase_fam"/>
</dbReference>
<dbReference type="InterPro" id="IPR037528">
    <property type="entry name" value="ArgB"/>
</dbReference>
<dbReference type="InterPro" id="IPR001048">
    <property type="entry name" value="Asp/Glu/Uridylate_kinase"/>
</dbReference>
<dbReference type="InterPro" id="IPR001057">
    <property type="entry name" value="Glu/AcGlu_kinase"/>
</dbReference>
<dbReference type="InterPro" id="IPR041727">
    <property type="entry name" value="NAGK-C"/>
</dbReference>
<dbReference type="NCBIfam" id="TIGR00761">
    <property type="entry name" value="argB"/>
    <property type="match status" value="1"/>
</dbReference>
<dbReference type="PANTHER" id="PTHR23342">
    <property type="entry name" value="N-ACETYLGLUTAMATE SYNTHASE"/>
    <property type="match status" value="1"/>
</dbReference>
<dbReference type="PANTHER" id="PTHR23342:SF0">
    <property type="entry name" value="N-ACETYLGLUTAMATE SYNTHASE, MITOCHONDRIAL"/>
    <property type="match status" value="1"/>
</dbReference>
<dbReference type="Pfam" id="PF00696">
    <property type="entry name" value="AA_kinase"/>
    <property type="match status" value="1"/>
</dbReference>
<dbReference type="PRINTS" id="PR00474">
    <property type="entry name" value="GLU5KINASE"/>
</dbReference>
<dbReference type="SUPFAM" id="SSF53633">
    <property type="entry name" value="Carbamate kinase-like"/>
    <property type="match status" value="1"/>
</dbReference>
<sequence>MNAPTRTPPPSNGGHGSTGSTGSTGDAAPGGGTGRGPAATARGHAALAKTQVLIEALPWLSRFQGATIVVKYGGNAMTEPALREAFAADVVFLRHSGLRVVVVHGGGPQITAHLERLGVPSTFVGGLRVTTPQTMDVVRMVLLGQVNRDVVGLVNDHGPFAVGLSGEDANLFTARRRPAIVDGREVDVGLVGDIVEVRPETINALLGSGKVPVVASVARGVDGGVYNVNADTAAAELAVALGATKLVVLTDVEGLYADWPASDEVISELSITELEQLLPSLTAGMIPKMEACRRAVRGGVPQAHVLDGRVPHAVLLEIFTDDGIGTLIMAESGTSPEPGTPPAPAARPAGIVPAGEPTGGTP</sequence>
<keyword id="KW-0028">Amino-acid biosynthesis</keyword>
<keyword id="KW-0055">Arginine biosynthesis</keyword>
<keyword id="KW-0067">ATP-binding</keyword>
<keyword id="KW-0963">Cytoplasm</keyword>
<keyword id="KW-0418">Kinase</keyword>
<keyword id="KW-0547">Nucleotide-binding</keyword>
<keyword id="KW-1185">Reference proteome</keyword>
<keyword id="KW-0808">Transferase</keyword>